<proteinExistence type="inferred from homology"/>
<comment type="function">
    <text>Can detoxify the phytoalexin pisatin from garden pea. Pisatin is an antimicrobial compound produced by pea in response to infection by plant pathogens.</text>
</comment>
<comment type="cofactor">
    <cofactor evidence="1">
        <name>heme</name>
        <dbReference type="ChEBI" id="CHEBI:30413"/>
    </cofactor>
</comment>
<comment type="similarity">
    <text evidence="2">Belongs to the cytochrome P450 family.</text>
</comment>
<keyword id="KW-0349">Heme</keyword>
<keyword id="KW-0408">Iron</keyword>
<keyword id="KW-0479">Metal-binding</keyword>
<keyword id="KW-0503">Monooxygenase</keyword>
<keyword id="KW-0560">Oxidoreductase</keyword>
<evidence type="ECO:0000250" key="1"/>
<evidence type="ECO:0000305" key="2"/>
<dbReference type="EC" id="1.14.-.-"/>
<dbReference type="EMBL" id="X73145">
    <property type="protein sequence ID" value="CAA51665.1"/>
    <property type="molecule type" value="Genomic_DNA"/>
</dbReference>
<dbReference type="PIR" id="S34286">
    <property type="entry name" value="S34286"/>
</dbReference>
<dbReference type="SMR" id="P38364"/>
<dbReference type="VEuPathDB" id="FungiDB:NECHADRAFT_64937"/>
<dbReference type="BioCyc" id="MetaCyc:MONOMER-19131"/>
<dbReference type="GO" id="GO:0020037">
    <property type="term" value="F:heme binding"/>
    <property type="evidence" value="ECO:0007669"/>
    <property type="project" value="InterPro"/>
</dbReference>
<dbReference type="GO" id="GO:0005506">
    <property type="term" value="F:iron ion binding"/>
    <property type="evidence" value="ECO:0007669"/>
    <property type="project" value="InterPro"/>
</dbReference>
<dbReference type="GO" id="GO:0004497">
    <property type="term" value="F:monooxygenase activity"/>
    <property type="evidence" value="ECO:0007669"/>
    <property type="project" value="UniProtKB-KW"/>
</dbReference>
<dbReference type="GO" id="GO:0016705">
    <property type="term" value="F:oxidoreductase activity, acting on paired donors, with incorporation or reduction of molecular oxygen"/>
    <property type="evidence" value="ECO:0007669"/>
    <property type="project" value="InterPro"/>
</dbReference>
<dbReference type="CDD" id="cd11060">
    <property type="entry name" value="CYP57A1-like"/>
    <property type="match status" value="1"/>
</dbReference>
<dbReference type="Gene3D" id="1.10.630.10">
    <property type="entry name" value="Cytochrome P450"/>
    <property type="match status" value="1"/>
</dbReference>
<dbReference type="InterPro" id="IPR001128">
    <property type="entry name" value="Cyt_P450"/>
</dbReference>
<dbReference type="InterPro" id="IPR017972">
    <property type="entry name" value="Cyt_P450_CS"/>
</dbReference>
<dbReference type="InterPro" id="IPR002401">
    <property type="entry name" value="Cyt_P450_E_grp-I"/>
</dbReference>
<dbReference type="InterPro" id="IPR036396">
    <property type="entry name" value="Cyt_P450_sf"/>
</dbReference>
<dbReference type="InterPro" id="IPR050121">
    <property type="entry name" value="Cytochrome_P450_monoxygenase"/>
</dbReference>
<dbReference type="PANTHER" id="PTHR24305">
    <property type="entry name" value="CYTOCHROME P450"/>
    <property type="match status" value="1"/>
</dbReference>
<dbReference type="PANTHER" id="PTHR24305:SF190">
    <property type="entry name" value="P450, PUTATIVE (EUROFUNG)-RELATED"/>
    <property type="match status" value="1"/>
</dbReference>
<dbReference type="Pfam" id="PF00067">
    <property type="entry name" value="p450"/>
    <property type="match status" value="1"/>
</dbReference>
<dbReference type="PRINTS" id="PR00463">
    <property type="entry name" value="EP450I"/>
</dbReference>
<dbReference type="PRINTS" id="PR00385">
    <property type="entry name" value="P450"/>
</dbReference>
<dbReference type="SUPFAM" id="SSF48264">
    <property type="entry name" value="Cytochrome P450"/>
    <property type="match status" value="1"/>
</dbReference>
<dbReference type="PROSITE" id="PS00086">
    <property type="entry name" value="CYTOCHROME_P450"/>
    <property type="match status" value="1"/>
</dbReference>
<protein>
    <recommendedName>
        <fullName>Pisatin demethylase</fullName>
        <ecNumber>1.14.-.-</ecNumber>
    </recommendedName>
    <alternativeName>
        <fullName>Cytochrome P450 57A2</fullName>
    </alternativeName>
</protein>
<name>PID6_FUSVN</name>
<reference key="1">
    <citation type="journal article" date="1994" name="Gene">
        <title>Cloning and characterization of the PDA6-1 gene encoding a fungal cytochrome P-450 which detoxifies the phytoalexin pisatin from garden pea.</title>
        <authorList>
            <person name="Reimmann C."/>
            <person name="Vanetten H.D."/>
        </authorList>
    </citation>
    <scope>NUCLEOTIDE SEQUENCE [GENOMIC DNA]</scope>
    <source>
        <strain>156-30-6</strain>
    </source>
</reference>
<sequence length="506" mass="56877">MLVDTGLGLISELRARLGWAALLQIVPVTVVAYNLLWFIYTSFFSSLRKIPGPFLARISRVWEIKKAATGNIHEIVMDLHRCHGPIVRIGPNRYDFDTMEALKIIYRIGNALPKADYYIPFGLPSSPNLFDVQNPARHSAMKKQVASLYTMTALLSYEAGVDGQTIILKEQLQRFCDQKQVIDLPQFLQYYAFDVIGVITVGKSMGMMETNSDTNGACGALDAMWHYSSMMAFIPHMHAWWLRLSSLLPIDVPIKGLTEYVEQRIIQYRLKAAEFGDDDALKGENNFLAKLILMERQGTVTSTETQQAVGLNIGAGSDTTANALSSILYFLYTNPRTLRRLREELDTHVKEDPIRFQQSQSMPYLQAVIKEALRLHPGVGTQLTRVVPKGGLVIEGQFFPEGAEVGVNGWALYHNKAIFGNDASVFRPERWLETKGNLNIGGSFAFGAGSRSCIGKNISILEMSKAIPQIVRNFDIEINHGDMTWKNECWWFVKPEYKAMIKPRAA</sequence>
<gene>
    <name type="primary">PDA6-1</name>
    <name type="synonym">CYP57A2</name>
</gene>
<feature type="chain" id="PRO_0000052044" description="Pisatin demethylase">
    <location>
        <begin position="1"/>
        <end position="506"/>
    </location>
</feature>
<feature type="binding site" description="axial binding residue" evidence="1">
    <location>
        <position position="453"/>
    </location>
    <ligand>
        <name>heme</name>
        <dbReference type="ChEBI" id="CHEBI:30413"/>
    </ligand>
    <ligandPart>
        <name>Fe</name>
        <dbReference type="ChEBI" id="CHEBI:18248"/>
    </ligandPart>
</feature>
<organism>
    <name type="scientific">Fusarium vanettenii</name>
    <name type="common">Neocosmospora pisi</name>
    <dbReference type="NCBI Taxonomy" id="2747968"/>
    <lineage>
        <taxon>Eukaryota</taxon>
        <taxon>Fungi</taxon>
        <taxon>Dikarya</taxon>
        <taxon>Ascomycota</taxon>
        <taxon>Pezizomycotina</taxon>
        <taxon>Sordariomycetes</taxon>
        <taxon>Hypocreomycetidae</taxon>
        <taxon>Hypocreales</taxon>
        <taxon>Nectriaceae</taxon>
        <taxon>Fusarium</taxon>
        <taxon>Fusarium solani species complex</taxon>
    </lineage>
</organism>
<accession>P38364</accession>